<comment type="catalytic activity">
    <reaction>
        <text>Hydrolysis of terminal non-reducing N-acetyl-D-hexosamine residues in N-acetyl-beta-D-hexosaminides.</text>
        <dbReference type="EC" id="3.2.1.52"/>
    </reaction>
</comment>
<comment type="subcellular location">
    <subcellularLocation>
        <location evidence="3">Secreted</location>
        <location evidence="3">Cell wall</location>
        <topology evidence="3">Peptidoglycan-anchor</topology>
    </subcellularLocation>
</comment>
<comment type="similarity">
    <text evidence="5">Belongs to the glycosyl hydrolase 20 family.</text>
</comment>
<keyword id="KW-0002">3D-structure</keyword>
<keyword id="KW-0134">Cell wall</keyword>
<keyword id="KW-0326">Glycosidase</keyword>
<keyword id="KW-0378">Hydrolase</keyword>
<keyword id="KW-0572">Peptidoglycan-anchor</keyword>
<keyword id="KW-1185">Reference proteome</keyword>
<keyword id="KW-0677">Repeat</keyword>
<keyword id="KW-0964">Secreted</keyword>
<keyword id="KW-0732">Signal</keyword>
<feature type="signal peptide" evidence="1">
    <location>
        <begin position="1"/>
        <end position="33"/>
    </location>
</feature>
<feature type="chain" id="PRO_0000012020" description="Beta-N-acetylhexosaminidase">
    <location>
        <begin position="34"/>
        <end position="1284"/>
    </location>
</feature>
<feature type="propeptide" id="PRO_0000012021" description="Removed by sortase" evidence="3">
    <location>
        <begin position="1285"/>
        <end position="1312"/>
    </location>
</feature>
<feature type="domain" description="G5 1" evidence="2">
    <location>
        <begin position="1059"/>
        <end position="1138"/>
    </location>
</feature>
<feature type="domain" description="G5 2" evidence="2">
    <location>
        <begin position="1150"/>
        <end position="1230"/>
    </location>
</feature>
<feature type="region of interest" description="Disordered" evidence="4">
    <location>
        <begin position="38"/>
        <end position="178"/>
    </location>
</feature>
<feature type="region of interest" description="Catalytic domain 1">
    <location>
        <begin position="176"/>
        <end position="616"/>
    </location>
</feature>
<feature type="region of interest" description="Catalytic domain 2">
    <location>
        <begin position="621"/>
        <end position="1046"/>
    </location>
</feature>
<feature type="region of interest" description="Disordered" evidence="4">
    <location>
        <begin position="1244"/>
        <end position="1290"/>
    </location>
</feature>
<feature type="short sequence motif" description="LPXTG sorting signal" evidence="3">
    <location>
        <begin position="1281"/>
        <end position="1285"/>
    </location>
</feature>
<feature type="compositionally biased region" description="Polar residues" evidence="4">
    <location>
        <begin position="38"/>
        <end position="59"/>
    </location>
</feature>
<feature type="compositionally biased region" description="Basic and acidic residues" evidence="4">
    <location>
        <begin position="118"/>
        <end position="177"/>
    </location>
</feature>
<feature type="compositionally biased region" description="Basic and acidic residues" evidence="4">
    <location>
        <begin position="1277"/>
        <end position="1286"/>
    </location>
</feature>
<feature type="modified residue" description="Pentaglycyl murein peptidoglycan amidated threonine" evidence="3">
    <location>
        <position position="1284"/>
    </location>
</feature>
<feature type="sequence conflict" description="In Ref. 1; AAC41450." evidence="5" ref="1">
    <location>
        <position position="39"/>
    </location>
</feature>
<feature type="sequence conflict" description="In Ref. 1; AAC41450." evidence="5" ref="1">
    <original>V</original>
    <variation>E</variation>
    <location>
        <position position="69"/>
    </location>
</feature>
<feature type="sequence conflict" description="In Ref. 1; AAC41450." evidence="5" ref="1">
    <original>A</original>
    <variation>E</variation>
    <location>
        <position position="169"/>
    </location>
</feature>
<feature type="sequence conflict" description="In Ref. 1; AAC41450." evidence="5" ref="1">
    <original>Q</original>
    <variation>L</variation>
    <location>
        <position position="617"/>
    </location>
</feature>
<feature type="sequence conflict" description="In Ref. 1; AAC41450." evidence="5" ref="1">
    <original>V</original>
    <variation>A</variation>
    <location>
        <position position="1045"/>
    </location>
</feature>
<feature type="sequence conflict" description="In Ref. 1; AAC41450." evidence="5" ref="1">
    <original>E</original>
    <variation>K</variation>
    <location>
        <position position="1161"/>
    </location>
</feature>
<feature type="sequence conflict" description="In Ref. 1; AAC41450." evidence="5" ref="1">
    <original>C</original>
    <variation>R</variation>
    <location>
        <position position="1171"/>
    </location>
</feature>
<feature type="sequence conflict" description="In Ref. 1; AAC41450." evidence="5" ref="1">
    <original>V</original>
    <variation>A</variation>
    <location>
        <position position="1267"/>
    </location>
</feature>
<feature type="helix" evidence="7">
    <location>
        <begin position="181"/>
        <end position="184"/>
    </location>
</feature>
<feature type="strand" evidence="7">
    <location>
        <begin position="186"/>
        <end position="193"/>
    </location>
</feature>
<feature type="turn" evidence="7">
    <location>
        <begin position="194"/>
        <end position="196"/>
    </location>
</feature>
<feature type="helix" evidence="7">
    <location>
        <begin position="201"/>
        <end position="214"/>
    </location>
</feature>
<feature type="strand" evidence="7">
    <location>
        <begin position="218"/>
        <end position="228"/>
    </location>
</feature>
<feature type="strand" evidence="7">
    <location>
        <begin position="237"/>
        <end position="239"/>
    </location>
</feature>
<feature type="strand" evidence="7">
    <location>
        <begin position="242"/>
        <end position="244"/>
    </location>
</feature>
<feature type="helix" evidence="7">
    <location>
        <begin position="246"/>
        <end position="260"/>
    </location>
</feature>
<feature type="helix" evidence="7">
    <location>
        <begin position="271"/>
        <end position="283"/>
    </location>
</feature>
<feature type="strand" evidence="7">
    <location>
        <begin position="287"/>
        <end position="297"/>
    </location>
</feature>
<feature type="helix" evidence="7">
    <location>
        <begin position="299"/>
        <end position="308"/>
    </location>
</feature>
<feature type="strand" evidence="7">
    <location>
        <begin position="314"/>
        <end position="317"/>
    </location>
</feature>
<feature type="strand" evidence="7">
    <location>
        <begin position="320"/>
        <end position="326"/>
    </location>
</feature>
<feature type="helix" evidence="7">
    <location>
        <begin position="331"/>
        <end position="348"/>
    </location>
</feature>
<feature type="turn" evidence="7">
    <location>
        <begin position="349"/>
        <end position="351"/>
    </location>
</feature>
<feature type="strand" evidence="7">
    <location>
        <begin position="353"/>
        <end position="358"/>
    </location>
</feature>
<feature type="turn" evidence="7">
    <location>
        <begin position="362"/>
        <end position="368"/>
    </location>
</feature>
<feature type="helix" evidence="7">
    <location>
        <begin position="371"/>
        <end position="380"/>
    </location>
</feature>
<feature type="strand" evidence="8">
    <location>
        <begin position="383"/>
        <end position="385"/>
    </location>
</feature>
<feature type="helix" evidence="7">
    <location>
        <begin position="390"/>
        <end position="407"/>
    </location>
</feature>
<feature type="strand" evidence="7">
    <location>
        <begin position="411"/>
        <end position="416"/>
    </location>
</feature>
<feature type="turn" evidence="7">
    <location>
        <begin position="417"/>
        <end position="420"/>
    </location>
</feature>
<feature type="helix" evidence="7">
    <location>
        <begin position="421"/>
        <end position="423"/>
    </location>
</feature>
<feature type="strand" evidence="7">
    <location>
        <begin position="435"/>
        <end position="438"/>
    </location>
</feature>
<feature type="helix" evidence="7">
    <location>
        <begin position="451"/>
        <end position="456"/>
    </location>
</feature>
<feature type="strand" evidence="7">
    <location>
        <begin position="461"/>
        <end position="463"/>
    </location>
</feature>
<feature type="helix" evidence="7">
    <location>
        <begin position="466"/>
        <end position="468"/>
    </location>
</feature>
<feature type="helix" evidence="7">
    <location>
        <begin position="484"/>
        <end position="493"/>
    </location>
</feature>
<feature type="strand" evidence="7">
    <location>
        <begin position="510"/>
        <end position="517"/>
    </location>
</feature>
<feature type="helix" evidence="7">
    <location>
        <begin position="527"/>
        <end position="540"/>
    </location>
</feature>
<feature type="turn" evidence="7">
    <location>
        <begin position="541"/>
        <end position="544"/>
    </location>
</feature>
<feature type="helix" evidence="7">
    <location>
        <begin position="550"/>
        <end position="557"/>
    </location>
</feature>
<feature type="helix" evidence="7">
    <location>
        <begin position="568"/>
        <end position="582"/>
    </location>
</feature>
<feature type="helix" evidence="7">
    <location>
        <begin position="590"/>
        <end position="592"/>
    </location>
</feature>
<feature type="helix" evidence="7">
    <location>
        <begin position="593"/>
        <end position="608"/>
    </location>
</feature>
<feature type="helix" evidence="10">
    <location>
        <begin position="627"/>
        <end position="630"/>
    </location>
</feature>
<feature type="strand" evidence="10">
    <location>
        <begin position="631"/>
        <end position="638"/>
    </location>
</feature>
<feature type="turn" evidence="10">
    <location>
        <begin position="639"/>
        <end position="641"/>
    </location>
</feature>
<feature type="helix" evidence="10">
    <location>
        <begin position="646"/>
        <end position="659"/>
    </location>
</feature>
<feature type="strand" evidence="10">
    <location>
        <begin position="663"/>
        <end position="673"/>
    </location>
</feature>
<feature type="strand" evidence="10">
    <location>
        <begin position="682"/>
        <end position="684"/>
    </location>
</feature>
<feature type="strand" evidence="10">
    <location>
        <begin position="687"/>
        <end position="689"/>
    </location>
</feature>
<feature type="helix" evidence="10">
    <location>
        <begin position="691"/>
        <end position="705"/>
    </location>
</feature>
<feature type="helix" evidence="10">
    <location>
        <begin position="716"/>
        <end position="728"/>
    </location>
</feature>
<feature type="strand" evidence="10">
    <location>
        <begin position="732"/>
        <end position="742"/>
    </location>
</feature>
<feature type="helix" evidence="10">
    <location>
        <begin position="744"/>
        <end position="752"/>
    </location>
</feature>
<feature type="strand" evidence="10">
    <location>
        <begin position="759"/>
        <end position="770"/>
    </location>
</feature>
<feature type="helix" evidence="10">
    <location>
        <begin position="775"/>
        <end position="792"/>
    </location>
</feature>
<feature type="turn" evidence="9">
    <location>
        <begin position="793"/>
        <end position="795"/>
    </location>
</feature>
<feature type="strand" evidence="10">
    <location>
        <begin position="796"/>
        <end position="802"/>
    </location>
</feature>
<feature type="helix" evidence="10">
    <location>
        <begin position="808"/>
        <end position="810"/>
    </location>
</feature>
<feature type="helix" evidence="10">
    <location>
        <begin position="815"/>
        <end position="821"/>
    </location>
</feature>
<feature type="helix" evidence="10">
    <location>
        <begin position="825"/>
        <end position="841"/>
    </location>
</feature>
<feature type="strand" evidence="10">
    <location>
        <begin position="845"/>
        <end position="850"/>
    </location>
</feature>
<feature type="turn" evidence="10">
    <location>
        <begin position="851"/>
        <end position="854"/>
    </location>
</feature>
<feature type="helix" evidence="10">
    <location>
        <begin position="855"/>
        <end position="857"/>
    </location>
</feature>
<feature type="strand" evidence="10">
    <location>
        <begin position="868"/>
        <end position="871"/>
    </location>
</feature>
<feature type="helix" evidence="10">
    <location>
        <begin position="884"/>
        <end position="889"/>
    </location>
</feature>
<feature type="strand" evidence="10">
    <location>
        <begin position="893"/>
        <end position="896"/>
    </location>
</feature>
<feature type="helix" evidence="10">
    <location>
        <begin position="899"/>
        <end position="901"/>
    </location>
</feature>
<feature type="strand" evidence="10">
    <location>
        <begin position="902"/>
        <end position="904"/>
    </location>
</feature>
<feature type="helix" evidence="10">
    <location>
        <begin position="909"/>
        <end position="911"/>
    </location>
</feature>
<feature type="helix" evidence="10">
    <location>
        <begin position="916"/>
        <end position="925"/>
    </location>
</feature>
<feature type="turn" evidence="10">
    <location>
        <begin position="936"/>
        <end position="938"/>
    </location>
</feature>
<feature type="strand" evidence="10">
    <location>
        <begin position="943"/>
        <end position="951"/>
    </location>
</feature>
<feature type="helix" evidence="10">
    <location>
        <begin position="961"/>
        <end position="974"/>
    </location>
</feature>
<feature type="turn" evidence="10">
    <location>
        <begin position="975"/>
        <end position="978"/>
    </location>
</feature>
<feature type="helix" evidence="10">
    <location>
        <begin position="984"/>
        <end position="990"/>
    </location>
</feature>
<feature type="helix" evidence="10">
    <location>
        <begin position="1002"/>
        <end position="1013"/>
    </location>
</feature>
<feature type="helix" evidence="10">
    <location>
        <begin position="1021"/>
        <end position="1023"/>
    </location>
</feature>
<feature type="helix" evidence="10">
    <location>
        <begin position="1024"/>
        <end position="1036"/>
    </location>
</feature>
<feature type="strand" evidence="6">
    <location>
        <begin position="1055"/>
        <end position="1058"/>
    </location>
</feature>
<feature type="strand" evidence="6">
    <location>
        <begin position="1060"/>
        <end position="1063"/>
    </location>
</feature>
<feature type="strand" evidence="6">
    <location>
        <begin position="1065"/>
        <end position="1073"/>
    </location>
</feature>
<feature type="strand" evidence="6">
    <location>
        <begin position="1085"/>
        <end position="1088"/>
    </location>
</feature>
<feature type="strand" evidence="6">
    <location>
        <begin position="1092"/>
        <end position="1094"/>
    </location>
</feature>
<feature type="strand" evidence="6">
    <location>
        <begin position="1099"/>
        <end position="1109"/>
    </location>
</feature>
<feature type="strand" evidence="6">
    <location>
        <begin position="1118"/>
        <end position="1120"/>
    </location>
</feature>
<feature type="strand" evidence="6">
    <location>
        <begin position="1131"/>
        <end position="1134"/>
    </location>
</feature>
<reference key="1">
    <citation type="journal article" date="1995" name="J. Biol. Chem.">
        <title>Cloning and expression of the beta-N-acetylglucosaminidase gene from Streptococcus pneumoniae. Generation of truncated enzymes with modified aglycon specificity.</title>
        <authorList>
            <person name="Clarke V.A."/>
            <person name="Platt N."/>
            <person name="Butters T.D."/>
        </authorList>
    </citation>
    <scope>NUCLEOTIDE SEQUENCE [GENOMIC DNA]</scope>
    <source>
        <strain>ATCC 12213</strain>
    </source>
</reference>
<reference key="2">
    <citation type="journal article" date="2001" name="Science">
        <title>Complete genome sequence of a virulent isolate of Streptococcus pneumoniae.</title>
        <authorList>
            <person name="Tettelin H."/>
            <person name="Nelson K.E."/>
            <person name="Paulsen I.T."/>
            <person name="Eisen J.A."/>
            <person name="Read T.D."/>
            <person name="Peterson S.N."/>
            <person name="Heidelberg J.F."/>
            <person name="DeBoy R.T."/>
            <person name="Haft D.H."/>
            <person name="Dodson R.J."/>
            <person name="Durkin A.S."/>
            <person name="Gwinn M.L."/>
            <person name="Kolonay J.F."/>
            <person name="Nelson W.C."/>
            <person name="Peterson J.D."/>
            <person name="Umayam L.A."/>
            <person name="White O."/>
            <person name="Salzberg S.L."/>
            <person name="Lewis M.R."/>
            <person name="Radune D."/>
            <person name="Holtzapple E.K."/>
            <person name="Khouri H.M."/>
            <person name="Wolf A.M."/>
            <person name="Utterback T.R."/>
            <person name="Hansen C.L."/>
            <person name="McDonald L.A."/>
            <person name="Feldblyum T.V."/>
            <person name="Angiuoli S.V."/>
            <person name="Dickinson T."/>
            <person name="Hickey E.K."/>
            <person name="Holt I.E."/>
            <person name="Loftus B.J."/>
            <person name="Yang F."/>
            <person name="Smith H.O."/>
            <person name="Venter J.C."/>
            <person name="Dougherty B.A."/>
            <person name="Morrison D.A."/>
            <person name="Hollingshead S.K."/>
            <person name="Fraser C.M."/>
        </authorList>
    </citation>
    <scope>NUCLEOTIDE SEQUENCE [LARGE SCALE GENOMIC DNA]</scope>
    <source>
        <strain>ATCC BAA-334 / TIGR4</strain>
    </source>
</reference>
<sequence>MKHEKQQRFSIRKYAVGAASVLIGFAFQAQTVAADGVTPTTTENQPTIHTVSDSPQSSENRTEETPKAVLQPEAPKTVETETPATDKVASLPKTEEKPQEEVSSTPSDKAEVVTPTSAEKETANKKAEEASPKKEEAKEVDSKESNTDKTDKDKPAKKDEAKAEADKPATEAGKERAATVNEKLAKKKIVSIDAGRKYFSPEQLKEIIDKAKHYGYTDLHLLVGNDGLRFMLDDMSITANGKTYASDDVKRAIEKGTNDYYNDPNGNHLTESQMTDLINYAKDKGIGLIPTVNSPGHMDAILNAMKELGIQNPNFSYFGKKSARTVDLDNEQAVAFTKALIDKYAAYFAKKTEIFNIGLDEYANDATDAKGWSVLQADKYYPNEGYPVKGYEKFIAYANDLARIVKSHGLKPMAFNDGIYYNSDTSFGSFDKDIIVSMWTGGWGGYDVASSKLLAEKGHQILNTNDAWYYVLGRNADGQGWYNLDQGLNGIKNTPITSVPKTEGADIPIIGGMVAAWADTPSARYSPSRLFKLMRHFANANAEYFAADYESAEQALNEVPKDLNRYTAESVTAVKEAEKAIRSLDSNLSRAQQDTIDQAIAKLQETVNNLTLTPEAQKEEEAKREVEKLAKNKVISIDAGRKYFTLNQLKRIVDKASELGYSDVHLLLGNDGLRFLLDDMTITANGKTYASDDVKKAIIEGTKAYYDDPNGTALTQAEVTELIEYAKSKDIGLIPAINSPGHMDAMLVAMEKLGIKNPQAHFDKVSKTTMDLKNEEAMNFVKALIGKYMDFFAGKTKIFNFGTDEYANDATSAQGWYYLKWYQLYGKFAEYANTLAAMAKERGLQPMAFNDGFYYEDKDDVQFDKDVLISYWSKGWWGYNLASPQYLASKGYKFLNTNGDWYYILGQKPEDGGGFLKKAIENTGKTPFNQLASTKYPEVDLPTVGSMLSIWADRPSAEYKEEEIFELMTAFADHNKDYFRANYNALREELAKIPTNLEGYSKESLEALDAAKTALNYNLNRNKQAELDTLVANLKAALQGLKPAVTHSGSLDENEVAANVETRPELITRTEEIPFEVIKKENPNLPAGQENIITAGVKGERTHYISVLTENGKTTETVLDSQVTKEVINQVVEVGAPVTHKGDESGLAPTTEVKPRLDIQEEEIPFTTVTCENPLLLKGKTQVITKGVNGHRSNFYSVSTSADGKEVKTLVNSVVAQEAVTQIVEVGTMVTHVGDENGQAAIAEEKPKLEIPSQPAPSTAPAEESKVLPQDPAPVVTEKKLPETGTHDSAGLVVAGLMSTLAAYGLTKRKED</sequence>
<evidence type="ECO:0000255" key="1"/>
<evidence type="ECO:0000255" key="2">
    <source>
        <dbReference type="PROSITE-ProRule" id="PRU00437"/>
    </source>
</evidence>
<evidence type="ECO:0000255" key="3">
    <source>
        <dbReference type="PROSITE-ProRule" id="PRU00477"/>
    </source>
</evidence>
<evidence type="ECO:0000256" key="4">
    <source>
        <dbReference type="SAM" id="MobiDB-lite"/>
    </source>
</evidence>
<evidence type="ECO:0000305" key="5"/>
<evidence type="ECO:0007829" key="6">
    <source>
        <dbReference type="PDB" id="2LTJ"/>
    </source>
</evidence>
<evidence type="ECO:0007829" key="7">
    <source>
        <dbReference type="PDB" id="4AZ6"/>
    </source>
</evidence>
<evidence type="ECO:0007829" key="8">
    <source>
        <dbReference type="PDB" id="4AZB"/>
    </source>
</evidence>
<evidence type="ECO:0007829" key="9">
    <source>
        <dbReference type="PDB" id="4AZC"/>
    </source>
</evidence>
<evidence type="ECO:0007829" key="10">
    <source>
        <dbReference type="PDB" id="4AZI"/>
    </source>
</evidence>
<accession>P49610</accession>
<protein>
    <recommendedName>
        <fullName>Beta-N-acetylhexosaminidase</fullName>
        <ecNumber>3.2.1.52</ecNumber>
    </recommendedName>
</protein>
<name>STRH_STRPN</name>
<gene>
    <name type="primary">strH</name>
    <name type="ordered locus">SP_0057</name>
</gene>
<dbReference type="EC" id="3.2.1.52"/>
<dbReference type="EMBL" id="L36923">
    <property type="protein sequence ID" value="AAC41450.1"/>
    <property type="molecule type" value="Genomic_DNA"/>
</dbReference>
<dbReference type="EMBL" id="AE005672">
    <property type="protein sequence ID" value="AAK74246.1"/>
    <property type="molecule type" value="Genomic_DNA"/>
</dbReference>
<dbReference type="PIR" id="A56390">
    <property type="entry name" value="A56390"/>
</dbReference>
<dbReference type="PIR" id="E95006">
    <property type="entry name" value="E95006"/>
</dbReference>
<dbReference type="RefSeq" id="WP_000679952.1">
    <property type="nucleotide sequence ID" value="NC_003028.3"/>
</dbReference>
<dbReference type="PDB" id="2LTJ">
    <property type="method" value="NMR"/>
    <property type="chains" value="A=1050-1140"/>
</dbReference>
<dbReference type="PDB" id="2YL5">
    <property type="method" value="X-ray"/>
    <property type="resolution" value="2.15 A"/>
    <property type="chains" value="A/B/C/D=627-1064"/>
</dbReference>
<dbReference type="PDB" id="2YL6">
    <property type="method" value="X-ray"/>
    <property type="resolution" value="1.60 A"/>
    <property type="chains" value="A=181-614"/>
</dbReference>
<dbReference type="PDB" id="2YL8">
    <property type="method" value="X-ray"/>
    <property type="resolution" value="1.75 A"/>
    <property type="chains" value="A=181-614"/>
</dbReference>
<dbReference type="PDB" id="2YL9">
    <property type="method" value="X-ray"/>
    <property type="resolution" value="2.65 A"/>
    <property type="chains" value="A/B/C/D=627-1062"/>
</dbReference>
<dbReference type="PDB" id="2YLA">
    <property type="method" value="X-ray"/>
    <property type="resolution" value="2.70 A"/>
    <property type="chains" value="A/B/C/D=627-1064"/>
</dbReference>
<dbReference type="PDB" id="2YLL">
    <property type="method" value="X-ray"/>
    <property type="resolution" value="1.85 A"/>
    <property type="chains" value="A=181-614"/>
</dbReference>
<dbReference type="PDB" id="4AZ5">
    <property type="method" value="X-ray"/>
    <property type="resolution" value="1.73 A"/>
    <property type="chains" value="A=181-614"/>
</dbReference>
<dbReference type="PDB" id="4AZ6">
    <property type="method" value="X-ray"/>
    <property type="resolution" value="1.36 A"/>
    <property type="chains" value="A=181-613"/>
</dbReference>
<dbReference type="PDB" id="4AZ7">
    <property type="method" value="X-ray"/>
    <property type="resolution" value="1.70 A"/>
    <property type="chains" value="A=181-613"/>
</dbReference>
<dbReference type="PDB" id="4AZB">
    <property type="method" value="X-ray"/>
    <property type="resolution" value="2.10 A"/>
    <property type="chains" value="A=181-614"/>
</dbReference>
<dbReference type="PDB" id="4AZC">
    <property type="method" value="X-ray"/>
    <property type="resolution" value="2.09 A"/>
    <property type="chains" value="A/B/C/D=627-1064"/>
</dbReference>
<dbReference type="PDB" id="4AZG">
    <property type="method" value="X-ray"/>
    <property type="resolution" value="2.40 A"/>
    <property type="chains" value="A/B=627-1064"/>
</dbReference>
<dbReference type="PDB" id="4AZH">
    <property type="method" value="X-ray"/>
    <property type="resolution" value="2.22 A"/>
    <property type="chains" value="A/B/C/D=627-1064"/>
</dbReference>
<dbReference type="PDB" id="4AZI">
    <property type="method" value="X-ray"/>
    <property type="resolution" value="1.98 A"/>
    <property type="chains" value="A/B=627-1064"/>
</dbReference>
<dbReference type="PDBsum" id="2LTJ"/>
<dbReference type="PDBsum" id="2YL5"/>
<dbReference type="PDBsum" id="2YL6"/>
<dbReference type="PDBsum" id="2YL8"/>
<dbReference type="PDBsum" id="2YL9"/>
<dbReference type="PDBsum" id="2YLA"/>
<dbReference type="PDBsum" id="2YLL"/>
<dbReference type="PDBsum" id="4AZ5"/>
<dbReference type="PDBsum" id="4AZ6"/>
<dbReference type="PDBsum" id="4AZ7"/>
<dbReference type="PDBsum" id="4AZB"/>
<dbReference type="PDBsum" id="4AZC"/>
<dbReference type="PDBsum" id="4AZG"/>
<dbReference type="PDBsum" id="4AZH"/>
<dbReference type="PDBsum" id="4AZI"/>
<dbReference type="SMR" id="P49610"/>
<dbReference type="CAZy" id="GH20">
    <property type="family name" value="Glycoside Hydrolase Family 20"/>
</dbReference>
<dbReference type="PaxDb" id="170187-SP_0057"/>
<dbReference type="EnsemblBacteria" id="AAK74246">
    <property type="protein sequence ID" value="AAK74246"/>
    <property type="gene ID" value="SP_0057"/>
</dbReference>
<dbReference type="KEGG" id="spn:SP_0057"/>
<dbReference type="eggNOG" id="COG3064">
    <property type="taxonomic scope" value="Bacteria"/>
</dbReference>
<dbReference type="eggNOG" id="COG3525">
    <property type="taxonomic scope" value="Bacteria"/>
</dbReference>
<dbReference type="eggNOG" id="COG3583">
    <property type="taxonomic scope" value="Bacteria"/>
</dbReference>
<dbReference type="BioCyc" id="SPNE170187:G1FZB-64-MONOMER"/>
<dbReference type="EvolutionaryTrace" id="P49610"/>
<dbReference type="Proteomes" id="UP000000585">
    <property type="component" value="Chromosome"/>
</dbReference>
<dbReference type="GO" id="GO:0005576">
    <property type="term" value="C:extracellular region"/>
    <property type="evidence" value="ECO:0007669"/>
    <property type="project" value="UniProtKB-KW"/>
</dbReference>
<dbReference type="GO" id="GO:0004563">
    <property type="term" value="F:beta-N-acetylhexosaminidase activity"/>
    <property type="evidence" value="ECO:0007669"/>
    <property type="project" value="UniProtKB-EC"/>
</dbReference>
<dbReference type="GO" id="GO:0005975">
    <property type="term" value="P:carbohydrate metabolic process"/>
    <property type="evidence" value="ECO:0007669"/>
    <property type="project" value="InterPro"/>
</dbReference>
<dbReference type="CDD" id="cd06564">
    <property type="entry name" value="GH20_DspB_LnbB-like"/>
    <property type="match status" value="2"/>
</dbReference>
<dbReference type="Gene3D" id="1.20.1270.90">
    <property type="entry name" value="AF1782-like"/>
    <property type="match status" value="2"/>
</dbReference>
<dbReference type="Gene3D" id="3.20.20.80">
    <property type="entry name" value="Glycosidases"/>
    <property type="match status" value="2"/>
</dbReference>
<dbReference type="Gene3D" id="2.20.230.10">
    <property type="entry name" value="Resuscitation-promoting factor rpfb"/>
    <property type="match status" value="2"/>
</dbReference>
<dbReference type="InterPro" id="IPR011098">
    <property type="entry name" value="G5_dom"/>
</dbReference>
<dbReference type="InterPro" id="IPR052764">
    <property type="entry name" value="GH20_Enzymes"/>
</dbReference>
<dbReference type="InterPro" id="IPR015883">
    <property type="entry name" value="Glyco_hydro_20_cat"/>
</dbReference>
<dbReference type="InterPro" id="IPR017853">
    <property type="entry name" value="Glycoside_hydrolase_SF"/>
</dbReference>
<dbReference type="InterPro" id="IPR019931">
    <property type="entry name" value="LPXTG_anchor"/>
</dbReference>
<dbReference type="InterPro" id="IPR005877">
    <property type="entry name" value="YSIRK_signal_dom"/>
</dbReference>
<dbReference type="NCBIfam" id="TIGR01167">
    <property type="entry name" value="LPXTG_anchor"/>
    <property type="match status" value="1"/>
</dbReference>
<dbReference type="NCBIfam" id="TIGR01168">
    <property type="entry name" value="YSIRK_signal"/>
    <property type="match status" value="1"/>
</dbReference>
<dbReference type="PANTHER" id="PTHR43678:SF1">
    <property type="entry name" value="BETA-N-ACETYLHEXOSAMINIDASE"/>
    <property type="match status" value="1"/>
</dbReference>
<dbReference type="PANTHER" id="PTHR43678">
    <property type="entry name" value="PUTATIVE (AFU_ORTHOLOGUE AFUA_2G00640)-RELATED"/>
    <property type="match status" value="1"/>
</dbReference>
<dbReference type="Pfam" id="PF07501">
    <property type="entry name" value="G5"/>
    <property type="match status" value="2"/>
</dbReference>
<dbReference type="Pfam" id="PF00728">
    <property type="entry name" value="Glyco_hydro_20"/>
    <property type="match status" value="2"/>
</dbReference>
<dbReference type="Pfam" id="PF00746">
    <property type="entry name" value="Gram_pos_anchor"/>
    <property type="match status" value="1"/>
</dbReference>
<dbReference type="Pfam" id="PF04650">
    <property type="entry name" value="YSIRK_signal"/>
    <property type="match status" value="1"/>
</dbReference>
<dbReference type="SMART" id="SM01208">
    <property type="entry name" value="G5"/>
    <property type="match status" value="2"/>
</dbReference>
<dbReference type="SUPFAM" id="SSF51445">
    <property type="entry name" value="(Trans)glycosidases"/>
    <property type="match status" value="2"/>
</dbReference>
<dbReference type="PROSITE" id="PS51109">
    <property type="entry name" value="G5"/>
    <property type="match status" value="2"/>
</dbReference>
<dbReference type="PROSITE" id="PS50847">
    <property type="entry name" value="GRAM_POS_ANCHORING"/>
    <property type="match status" value="1"/>
</dbReference>
<organism>
    <name type="scientific">Streptococcus pneumoniae serotype 4 (strain ATCC BAA-334 / TIGR4)</name>
    <dbReference type="NCBI Taxonomy" id="170187"/>
    <lineage>
        <taxon>Bacteria</taxon>
        <taxon>Bacillati</taxon>
        <taxon>Bacillota</taxon>
        <taxon>Bacilli</taxon>
        <taxon>Lactobacillales</taxon>
        <taxon>Streptococcaceae</taxon>
        <taxon>Streptococcus</taxon>
    </lineage>
</organism>
<proteinExistence type="evidence at protein level"/>